<feature type="chain" id="PRO_1000081728" description="ATP synthase epsilon chain">
    <location>
        <begin position="1"/>
        <end position="142"/>
    </location>
</feature>
<evidence type="ECO:0000255" key="1">
    <source>
        <dbReference type="HAMAP-Rule" id="MF_00530"/>
    </source>
</evidence>
<reference key="1">
    <citation type="submission" date="2007-11" db="EMBL/GenBank/DDBJ databases">
        <title>Genome sequencing of phylogenetically and phenotypically diverse Coxiella burnetii isolates.</title>
        <authorList>
            <person name="Seshadri R."/>
            <person name="Samuel J.E."/>
        </authorList>
    </citation>
    <scope>NUCLEOTIDE SEQUENCE [LARGE SCALE GENOMIC DNA]</scope>
    <source>
        <strain>RSA 331 / Henzerling II</strain>
    </source>
</reference>
<proteinExistence type="inferred from homology"/>
<protein>
    <recommendedName>
        <fullName evidence="1">ATP synthase epsilon chain</fullName>
    </recommendedName>
    <alternativeName>
        <fullName evidence="1">ATP synthase F1 sector epsilon subunit</fullName>
    </alternativeName>
    <alternativeName>
        <fullName evidence="1">F-ATPase epsilon subunit</fullName>
    </alternativeName>
</protein>
<keyword id="KW-0066">ATP synthesis</keyword>
<keyword id="KW-0997">Cell inner membrane</keyword>
<keyword id="KW-1003">Cell membrane</keyword>
<keyword id="KW-0139">CF(1)</keyword>
<keyword id="KW-0375">Hydrogen ion transport</keyword>
<keyword id="KW-0406">Ion transport</keyword>
<keyword id="KW-0472">Membrane</keyword>
<keyword id="KW-0813">Transport</keyword>
<gene>
    <name evidence="1" type="primary">atpC</name>
    <name type="ordered locus">COXBURSA331_A2150</name>
</gene>
<name>ATPE_COXBR</name>
<dbReference type="EMBL" id="CP000890">
    <property type="protein sequence ID" value="ABX78538.1"/>
    <property type="molecule type" value="Genomic_DNA"/>
</dbReference>
<dbReference type="RefSeq" id="WP_005770045.1">
    <property type="nucleotide sequence ID" value="NC_010117.1"/>
</dbReference>
<dbReference type="SMR" id="A9NBD2"/>
<dbReference type="KEGG" id="cbs:COXBURSA331_A2150"/>
<dbReference type="HOGENOM" id="CLU_084338_2_0_6"/>
<dbReference type="GO" id="GO:0005886">
    <property type="term" value="C:plasma membrane"/>
    <property type="evidence" value="ECO:0007669"/>
    <property type="project" value="UniProtKB-SubCell"/>
</dbReference>
<dbReference type="GO" id="GO:0045259">
    <property type="term" value="C:proton-transporting ATP synthase complex"/>
    <property type="evidence" value="ECO:0007669"/>
    <property type="project" value="UniProtKB-KW"/>
</dbReference>
<dbReference type="GO" id="GO:0005524">
    <property type="term" value="F:ATP binding"/>
    <property type="evidence" value="ECO:0007669"/>
    <property type="project" value="UniProtKB-UniRule"/>
</dbReference>
<dbReference type="GO" id="GO:0046933">
    <property type="term" value="F:proton-transporting ATP synthase activity, rotational mechanism"/>
    <property type="evidence" value="ECO:0007669"/>
    <property type="project" value="UniProtKB-UniRule"/>
</dbReference>
<dbReference type="CDD" id="cd12152">
    <property type="entry name" value="F1-ATPase_delta"/>
    <property type="match status" value="1"/>
</dbReference>
<dbReference type="FunFam" id="2.60.15.10:FF:000001">
    <property type="entry name" value="ATP synthase epsilon chain"/>
    <property type="match status" value="1"/>
</dbReference>
<dbReference type="Gene3D" id="1.20.5.440">
    <property type="entry name" value="ATP synthase delta/epsilon subunit, C-terminal domain"/>
    <property type="match status" value="1"/>
</dbReference>
<dbReference type="Gene3D" id="2.60.15.10">
    <property type="entry name" value="F0F1 ATP synthase delta/epsilon subunit, N-terminal"/>
    <property type="match status" value="1"/>
</dbReference>
<dbReference type="HAMAP" id="MF_00530">
    <property type="entry name" value="ATP_synth_epsil_bac"/>
    <property type="match status" value="1"/>
</dbReference>
<dbReference type="InterPro" id="IPR036794">
    <property type="entry name" value="ATP_F1_dsu/esu_C_sf"/>
</dbReference>
<dbReference type="InterPro" id="IPR001469">
    <property type="entry name" value="ATP_synth_F1_dsu/esu"/>
</dbReference>
<dbReference type="InterPro" id="IPR020546">
    <property type="entry name" value="ATP_synth_F1_dsu/esu_N"/>
</dbReference>
<dbReference type="InterPro" id="IPR020547">
    <property type="entry name" value="ATP_synth_F1_esu_C"/>
</dbReference>
<dbReference type="InterPro" id="IPR036771">
    <property type="entry name" value="ATPsynth_dsu/esu_N"/>
</dbReference>
<dbReference type="NCBIfam" id="TIGR01216">
    <property type="entry name" value="ATP_synt_epsi"/>
    <property type="match status" value="1"/>
</dbReference>
<dbReference type="NCBIfam" id="NF001847">
    <property type="entry name" value="PRK00571.1-4"/>
    <property type="match status" value="1"/>
</dbReference>
<dbReference type="PANTHER" id="PTHR13822">
    <property type="entry name" value="ATP SYNTHASE DELTA/EPSILON CHAIN"/>
    <property type="match status" value="1"/>
</dbReference>
<dbReference type="PANTHER" id="PTHR13822:SF10">
    <property type="entry name" value="ATP SYNTHASE EPSILON CHAIN, CHLOROPLASTIC"/>
    <property type="match status" value="1"/>
</dbReference>
<dbReference type="Pfam" id="PF00401">
    <property type="entry name" value="ATP-synt_DE"/>
    <property type="match status" value="1"/>
</dbReference>
<dbReference type="Pfam" id="PF02823">
    <property type="entry name" value="ATP-synt_DE_N"/>
    <property type="match status" value="1"/>
</dbReference>
<dbReference type="SUPFAM" id="SSF46604">
    <property type="entry name" value="Epsilon subunit of F1F0-ATP synthase C-terminal domain"/>
    <property type="match status" value="1"/>
</dbReference>
<dbReference type="SUPFAM" id="SSF51344">
    <property type="entry name" value="Epsilon subunit of F1F0-ATP synthase N-terminal domain"/>
    <property type="match status" value="1"/>
</dbReference>
<accession>A9NBD2</accession>
<sequence>MAKTMQLEIVSAEAAIFSGKVEMIVVTGGMGELGIYPGHRQLLTSLKPGQIKAILEGGKEEVFYMSGGMLEVQPEIVTILADTALRAVDLDEAAAISAKEEAERRLAKQKAGIEYSKAMTELAEAAAQLRAIQMLRKSAKKH</sequence>
<organism>
    <name type="scientific">Coxiella burnetii (strain RSA 331 / Henzerling II)</name>
    <dbReference type="NCBI Taxonomy" id="360115"/>
    <lineage>
        <taxon>Bacteria</taxon>
        <taxon>Pseudomonadati</taxon>
        <taxon>Pseudomonadota</taxon>
        <taxon>Gammaproteobacteria</taxon>
        <taxon>Legionellales</taxon>
        <taxon>Coxiellaceae</taxon>
        <taxon>Coxiella</taxon>
    </lineage>
</organism>
<comment type="function">
    <text evidence="1">Produces ATP from ADP in the presence of a proton gradient across the membrane.</text>
</comment>
<comment type="subunit">
    <text evidence="1">F-type ATPases have 2 components, CF(1) - the catalytic core - and CF(0) - the membrane proton channel. CF(1) has five subunits: alpha(3), beta(3), gamma(1), delta(1), epsilon(1). CF(0) has three main subunits: a, b and c.</text>
</comment>
<comment type="subcellular location">
    <subcellularLocation>
        <location evidence="1">Cell inner membrane</location>
        <topology evidence="1">Peripheral membrane protein</topology>
    </subcellularLocation>
</comment>
<comment type="similarity">
    <text evidence="1">Belongs to the ATPase epsilon chain family.</text>
</comment>